<reference key="1">
    <citation type="submission" date="2007-03" db="EMBL/GenBank/DDBJ databases">
        <title>Complete sequence of chromosome 1 of Burkholderia vietnamiensis G4.</title>
        <authorList>
            <consortium name="US DOE Joint Genome Institute"/>
            <person name="Copeland A."/>
            <person name="Lucas S."/>
            <person name="Lapidus A."/>
            <person name="Barry K."/>
            <person name="Detter J.C."/>
            <person name="Glavina del Rio T."/>
            <person name="Hammon N."/>
            <person name="Israni S."/>
            <person name="Dalin E."/>
            <person name="Tice H."/>
            <person name="Pitluck S."/>
            <person name="Chain P."/>
            <person name="Malfatti S."/>
            <person name="Shin M."/>
            <person name="Vergez L."/>
            <person name="Schmutz J."/>
            <person name="Larimer F."/>
            <person name="Land M."/>
            <person name="Hauser L."/>
            <person name="Kyrpides N."/>
            <person name="Tiedje J."/>
            <person name="Richardson P."/>
        </authorList>
    </citation>
    <scope>NUCLEOTIDE SEQUENCE [LARGE SCALE GENOMIC DNA]</scope>
    <source>
        <strain>G4 / LMG 22486</strain>
    </source>
</reference>
<proteinExistence type="inferred from homology"/>
<evidence type="ECO:0000255" key="1">
    <source>
        <dbReference type="HAMAP-Rule" id="MF_00102"/>
    </source>
</evidence>
<evidence type="ECO:0000305" key="2"/>
<organism>
    <name type="scientific">Burkholderia vietnamiensis (strain G4 / LMG 22486)</name>
    <name type="common">Burkholderia cepacia (strain R1808)</name>
    <dbReference type="NCBI Taxonomy" id="269482"/>
    <lineage>
        <taxon>Bacteria</taxon>
        <taxon>Pseudomonadati</taxon>
        <taxon>Pseudomonadota</taxon>
        <taxon>Betaproteobacteria</taxon>
        <taxon>Burkholderiales</taxon>
        <taxon>Burkholderiaceae</taxon>
        <taxon>Burkholderia</taxon>
        <taxon>Burkholderia cepacia complex</taxon>
    </lineage>
</organism>
<gene>
    <name evidence="1" type="primary">dapB</name>
    <name type="ordered locus">Bcep1808_0619</name>
</gene>
<name>DAPB_BURVG</name>
<accession>A4JBH8</accession>
<protein>
    <recommendedName>
        <fullName evidence="1">4-hydroxy-tetrahydrodipicolinate reductase</fullName>
        <shortName evidence="1">HTPA reductase</shortName>
        <ecNumber evidence="1">1.17.1.8</ecNumber>
    </recommendedName>
</protein>
<feature type="chain" id="PRO_1000008548" description="4-hydroxy-tetrahydrodipicolinate reductase">
    <location>
        <begin position="1"/>
        <end position="265"/>
    </location>
</feature>
<feature type="active site" description="Proton donor/acceptor" evidence="1">
    <location>
        <position position="153"/>
    </location>
</feature>
<feature type="active site" description="Proton donor" evidence="1">
    <location>
        <position position="157"/>
    </location>
</feature>
<feature type="binding site" evidence="1">
    <location>
        <begin position="7"/>
        <end position="12"/>
    </location>
    <ligand>
        <name>NAD(+)</name>
        <dbReference type="ChEBI" id="CHEBI:57540"/>
    </ligand>
</feature>
<feature type="binding site" evidence="1">
    <location>
        <position position="33"/>
    </location>
    <ligand>
        <name>NAD(+)</name>
        <dbReference type="ChEBI" id="CHEBI:57540"/>
    </ligand>
</feature>
<feature type="binding site" evidence="1">
    <location>
        <position position="34"/>
    </location>
    <ligand>
        <name>NADP(+)</name>
        <dbReference type="ChEBI" id="CHEBI:58349"/>
    </ligand>
</feature>
<feature type="binding site" evidence="1">
    <location>
        <begin position="96"/>
        <end position="98"/>
    </location>
    <ligand>
        <name>NAD(+)</name>
        <dbReference type="ChEBI" id="CHEBI:57540"/>
    </ligand>
</feature>
<feature type="binding site" evidence="1">
    <location>
        <begin position="120"/>
        <end position="123"/>
    </location>
    <ligand>
        <name>NAD(+)</name>
        <dbReference type="ChEBI" id="CHEBI:57540"/>
    </ligand>
</feature>
<feature type="binding site" evidence="1">
    <location>
        <position position="154"/>
    </location>
    <ligand>
        <name>(S)-2,3,4,5-tetrahydrodipicolinate</name>
        <dbReference type="ChEBI" id="CHEBI:16845"/>
    </ligand>
</feature>
<feature type="binding site" evidence="1">
    <location>
        <begin position="163"/>
        <end position="164"/>
    </location>
    <ligand>
        <name>(S)-2,3,4,5-tetrahydrodipicolinate</name>
        <dbReference type="ChEBI" id="CHEBI:16845"/>
    </ligand>
</feature>
<keyword id="KW-0028">Amino-acid biosynthesis</keyword>
<keyword id="KW-0963">Cytoplasm</keyword>
<keyword id="KW-0220">Diaminopimelate biosynthesis</keyword>
<keyword id="KW-0457">Lysine biosynthesis</keyword>
<keyword id="KW-0520">NAD</keyword>
<keyword id="KW-0521">NADP</keyword>
<keyword id="KW-0560">Oxidoreductase</keyword>
<comment type="function">
    <text evidence="1">Catalyzes the conversion of 4-hydroxy-tetrahydrodipicolinate (HTPA) to tetrahydrodipicolinate.</text>
</comment>
<comment type="catalytic activity">
    <reaction evidence="1">
        <text>(S)-2,3,4,5-tetrahydrodipicolinate + NAD(+) + H2O = (2S,4S)-4-hydroxy-2,3,4,5-tetrahydrodipicolinate + NADH + H(+)</text>
        <dbReference type="Rhea" id="RHEA:35323"/>
        <dbReference type="ChEBI" id="CHEBI:15377"/>
        <dbReference type="ChEBI" id="CHEBI:15378"/>
        <dbReference type="ChEBI" id="CHEBI:16845"/>
        <dbReference type="ChEBI" id="CHEBI:57540"/>
        <dbReference type="ChEBI" id="CHEBI:57945"/>
        <dbReference type="ChEBI" id="CHEBI:67139"/>
        <dbReference type="EC" id="1.17.1.8"/>
    </reaction>
</comment>
<comment type="catalytic activity">
    <reaction evidence="1">
        <text>(S)-2,3,4,5-tetrahydrodipicolinate + NADP(+) + H2O = (2S,4S)-4-hydroxy-2,3,4,5-tetrahydrodipicolinate + NADPH + H(+)</text>
        <dbReference type="Rhea" id="RHEA:35331"/>
        <dbReference type="ChEBI" id="CHEBI:15377"/>
        <dbReference type="ChEBI" id="CHEBI:15378"/>
        <dbReference type="ChEBI" id="CHEBI:16845"/>
        <dbReference type="ChEBI" id="CHEBI:57783"/>
        <dbReference type="ChEBI" id="CHEBI:58349"/>
        <dbReference type="ChEBI" id="CHEBI:67139"/>
        <dbReference type="EC" id="1.17.1.8"/>
    </reaction>
</comment>
<comment type="pathway">
    <text evidence="1">Amino-acid biosynthesis; L-lysine biosynthesis via DAP pathway; (S)-tetrahydrodipicolinate from L-aspartate: step 4/4.</text>
</comment>
<comment type="subcellular location">
    <subcellularLocation>
        <location evidence="1">Cytoplasm</location>
    </subcellularLocation>
</comment>
<comment type="similarity">
    <text evidence="1">Belongs to the DapB family.</text>
</comment>
<comment type="caution">
    <text evidence="2">Was originally thought to be a dihydrodipicolinate reductase (DHDPR), catalyzing the conversion of dihydrodipicolinate to tetrahydrodipicolinate. However, it was shown in E.coli that the substrate of the enzymatic reaction is not dihydrodipicolinate (DHDP) but in fact (2S,4S)-4-hydroxy-2,3,4,5-tetrahydrodipicolinic acid (HTPA), the product released by the DapA-catalyzed reaction.</text>
</comment>
<dbReference type="EC" id="1.17.1.8" evidence="1"/>
<dbReference type="EMBL" id="CP000614">
    <property type="protein sequence ID" value="ABO53631.1"/>
    <property type="molecule type" value="Genomic_DNA"/>
</dbReference>
<dbReference type="SMR" id="A4JBH8"/>
<dbReference type="KEGG" id="bvi:Bcep1808_0619"/>
<dbReference type="eggNOG" id="COG0289">
    <property type="taxonomic scope" value="Bacteria"/>
</dbReference>
<dbReference type="HOGENOM" id="CLU_047479_2_1_4"/>
<dbReference type="UniPathway" id="UPA00034">
    <property type="reaction ID" value="UER00018"/>
</dbReference>
<dbReference type="Proteomes" id="UP000002287">
    <property type="component" value="Chromosome 1"/>
</dbReference>
<dbReference type="GO" id="GO:0005829">
    <property type="term" value="C:cytosol"/>
    <property type="evidence" value="ECO:0007669"/>
    <property type="project" value="TreeGrafter"/>
</dbReference>
<dbReference type="GO" id="GO:0008839">
    <property type="term" value="F:4-hydroxy-tetrahydrodipicolinate reductase"/>
    <property type="evidence" value="ECO:0007669"/>
    <property type="project" value="UniProtKB-EC"/>
</dbReference>
<dbReference type="GO" id="GO:0051287">
    <property type="term" value="F:NAD binding"/>
    <property type="evidence" value="ECO:0007669"/>
    <property type="project" value="UniProtKB-UniRule"/>
</dbReference>
<dbReference type="GO" id="GO:0050661">
    <property type="term" value="F:NADP binding"/>
    <property type="evidence" value="ECO:0007669"/>
    <property type="project" value="UniProtKB-UniRule"/>
</dbReference>
<dbReference type="GO" id="GO:0016726">
    <property type="term" value="F:oxidoreductase activity, acting on CH or CH2 groups, NAD or NADP as acceptor"/>
    <property type="evidence" value="ECO:0007669"/>
    <property type="project" value="UniProtKB-UniRule"/>
</dbReference>
<dbReference type="GO" id="GO:0019877">
    <property type="term" value="P:diaminopimelate biosynthetic process"/>
    <property type="evidence" value="ECO:0007669"/>
    <property type="project" value="UniProtKB-UniRule"/>
</dbReference>
<dbReference type="GO" id="GO:0009089">
    <property type="term" value="P:lysine biosynthetic process via diaminopimelate"/>
    <property type="evidence" value="ECO:0007669"/>
    <property type="project" value="UniProtKB-UniRule"/>
</dbReference>
<dbReference type="CDD" id="cd02274">
    <property type="entry name" value="DHDPR_N"/>
    <property type="match status" value="1"/>
</dbReference>
<dbReference type="FunFam" id="3.30.360.10:FF:000004">
    <property type="entry name" value="4-hydroxy-tetrahydrodipicolinate reductase"/>
    <property type="match status" value="1"/>
</dbReference>
<dbReference type="FunFam" id="3.40.50.720:FF:000048">
    <property type="entry name" value="4-hydroxy-tetrahydrodipicolinate reductase"/>
    <property type="match status" value="1"/>
</dbReference>
<dbReference type="Gene3D" id="3.30.360.10">
    <property type="entry name" value="Dihydrodipicolinate Reductase, domain 2"/>
    <property type="match status" value="1"/>
</dbReference>
<dbReference type="Gene3D" id="3.40.50.720">
    <property type="entry name" value="NAD(P)-binding Rossmann-like Domain"/>
    <property type="match status" value="1"/>
</dbReference>
<dbReference type="HAMAP" id="MF_00102">
    <property type="entry name" value="DapB"/>
    <property type="match status" value="1"/>
</dbReference>
<dbReference type="InterPro" id="IPR022663">
    <property type="entry name" value="DapB_C"/>
</dbReference>
<dbReference type="InterPro" id="IPR000846">
    <property type="entry name" value="DapB_N"/>
</dbReference>
<dbReference type="InterPro" id="IPR022664">
    <property type="entry name" value="DapB_N_CS"/>
</dbReference>
<dbReference type="InterPro" id="IPR023940">
    <property type="entry name" value="DHDPR_bac"/>
</dbReference>
<dbReference type="InterPro" id="IPR036291">
    <property type="entry name" value="NAD(P)-bd_dom_sf"/>
</dbReference>
<dbReference type="NCBIfam" id="TIGR00036">
    <property type="entry name" value="dapB"/>
    <property type="match status" value="1"/>
</dbReference>
<dbReference type="PANTHER" id="PTHR20836:SF0">
    <property type="entry name" value="4-HYDROXY-TETRAHYDRODIPICOLINATE REDUCTASE 1, CHLOROPLASTIC-RELATED"/>
    <property type="match status" value="1"/>
</dbReference>
<dbReference type="PANTHER" id="PTHR20836">
    <property type="entry name" value="DIHYDRODIPICOLINATE REDUCTASE"/>
    <property type="match status" value="1"/>
</dbReference>
<dbReference type="Pfam" id="PF05173">
    <property type="entry name" value="DapB_C"/>
    <property type="match status" value="1"/>
</dbReference>
<dbReference type="Pfam" id="PF01113">
    <property type="entry name" value="DapB_N"/>
    <property type="match status" value="1"/>
</dbReference>
<dbReference type="PIRSF" id="PIRSF000161">
    <property type="entry name" value="DHPR"/>
    <property type="match status" value="1"/>
</dbReference>
<dbReference type="SUPFAM" id="SSF55347">
    <property type="entry name" value="Glyceraldehyde-3-phosphate dehydrogenase-like, C-terminal domain"/>
    <property type="match status" value="1"/>
</dbReference>
<dbReference type="SUPFAM" id="SSF51735">
    <property type="entry name" value="NAD(P)-binding Rossmann-fold domains"/>
    <property type="match status" value="1"/>
</dbReference>
<dbReference type="PROSITE" id="PS01298">
    <property type="entry name" value="DAPB"/>
    <property type="match status" value="1"/>
</dbReference>
<sequence length="265" mass="27796">MKIAIAGASGRMGRMLIEAVLNDADAQLVGALDRAGSPFLGQDAGAFVGKDTGIKLTDDLDAVFAQADYLIDFTRPEGTIAHIEAALRHDVKLVIGTTGFTAEQKAQLQAAAAKLGIVFAANMSVGVNVTLKLLEFAAQHFSHGYDIEIIEAHHRHKVDAPSGTALMMGEAVAGALGRSLDDCAVYGRHGVTGERDPSSIGFAAVRGGDIVGDHTVLFAGIGERIEITHKSSSRVSYAQGALRAVRFLSARGAGLFDMQDVLGLR</sequence>